<organism>
    <name type="scientific">Methanococcus maripaludis (strain C7 / ATCC BAA-1331)</name>
    <dbReference type="NCBI Taxonomy" id="426368"/>
    <lineage>
        <taxon>Archaea</taxon>
        <taxon>Methanobacteriati</taxon>
        <taxon>Methanobacteriota</taxon>
        <taxon>Methanomada group</taxon>
        <taxon>Methanococci</taxon>
        <taxon>Methanococcales</taxon>
        <taxon>Methanococcaceae</taxon>
        <taxon>Methanococcus</taxon>
    </lineage>
</organism>
<evidence type="ECO:0000255" key="1">
    <source>
        <dbReference type="HAMAP-Rule" id="MF_00024"/>
    </source>
</evidence>
<gene>
    <name evidence="1" type="primary">cobD</name>
    <name type="ordered locus">MmarC7_0198</name>
</gene>
<accession>A6VFP2</accession>
<feature type="chain" id="PRO_1000074381" description="Probable cobalamin biosynthesis protein CobD">
    <location>
        <begin position="1"/>
        <end position="306"/>
    </location>
</feature>
<feature type="transmembrane region" description="Helical" evidence="1">
    <location>
        <begin position="54"/>
        <end position="74"/>
    </location>
</feature>
<feature type="transmembrane region" description="Helical" evidence="1">
    <location>
        <begin position="88"/>
        <end position="108"/>
    </location>
</feature>
<feature type="transmembrane region" description="Helical" evidence="1">
    <location>
        <begin position="155"/>
        <end position="175"/>
    </location>
</feature>
<feature type="transmembrane region" description="Helical" evidence="1">
    <location>
        <begin position="215"/>
        <end position="235"/>
    </location>
</feature>
<feature type="transmembrane region" description="Helical" evidence="1">
    <location>
        <begin position="286"/>
        <end position="306"/>
    </location>
</feature>
<reference key="1">
    <citation type="submission" date="2007-06" db="EMBL/GenBank/DDBJ databases">
        <title>Complete sequence of Methanococcus maripaludis C7.</title>
        <authorList>
            <consortium name="US DOE Joint Genome Institute"/>
            <person name="Copeland A."/>
            <person name="Lucas S."/>
            <person name="Lapidus A."/>
            <person name="Barry K."/>
            <person name="Glavina del Rio T."/>
            <person name="Dalin E."/>
            <person name="Tice H."/>
            <person name="Pitluck S."/>
            <person name="Clum A."/>
            <person name="Schmutz J."/>
            <person name="Larimer F."/>
            <person name="Land M."/>
            <person name="Hauser L."/>
            <person name="Kyrpides N."/>
            <person name="Anderson I."/>
            <person name="Sieprawska-Lupa M."/>
            <person name="Whitman W.B."/>
            <person name="Richardson P."/>
        </authorList>
    </citation>
    <scope>NUCLEOTIDE SEQUENCE [LARGE SCALE GENOMIC DNA]</scope>
    <source>
        <strain>C7 / ATCC BAA-1331</strain>
    </source>
</reference>
<sequence length="306" mass="34234">MTNPIYLILADFFDRYIGEPPEKIHPVVFIGKLICFFENVFKSTNSVNKTRDLLFGFLNVILVLAIVFFMTYEIEQIINSISNSYIKISIYSIILSFSIGHKSLIEFSKAPIKFIVNNDLEGAKKSVQCIVSRNTSELDKKHILSASIESASENITDSIIAPLIYAAIFGLPGAFLYRAVNTFDAMIGYKSEKYQYYGKTAAYLDDILNFIPSRIAGMLLIISAPFYGGNIKSAIYGYFNEGNKTPSPNSGYTMATLANSLNMELEKIGYYKLGKGEITIEKALNSLKAVDYSVLLFLIIYTVLLM</sequence>
<proteinExistence type="inferred from homology"/>
<comment type="function">
    <text evidence="1">Converts cobyric acid to cobinamide by the addition of aminopropanol on the F carboxylic group.</text>
</comment>
<comment type="pathway">
    <text evidence="1">Cofactor biosynthesis; adenosylcobalamin biosynthesis.</text>
</comment>
<comment type="subcellular location">
    <subcellularLocation>
        <location evidence="1">Cell membrane</location>
        <topology evidence="1">Multi-pass membrane protein</topology>
    </subcellularLocation>
</comment>
<comment type="similarity">
    <text evidence="1">Belongs to the CobD/CbiB family.</text>
</comment>
<name>COBD_METM7</name>
<dbReference type="EMBL" id="CP000745">
    <property type="protein sequence ID" value="ABR65268.1"/>
    <property type="molecule type" value="Genomic_DNA"/>
</dbReference>
<dbReference type="STRING" id="426368.MmarC7_0198"/>
<dbReference type="KEGG" id="mmz:MmarC7_0198"/>
<dbReference type="eggNOG" id="arCOG04274">
    <property type="taxonomic scope" value="Archaea"/>
</dbReference>
<dbReference type="HOGENOM" id="CLU_054212_0_2_2"/>
<dbReference type="OrthoDB" id="46105at2157"/>
<dbReference type="UniPathway" id="UPA00148"/>
<dbReference type="GO" id="GO:0005886">
    <property type="term" value="C:plasma membrane"/>
    <property type="evidence" value="ECO:0007669"/>
    <property type="project" value="UniProtKB-SubCell"/>
</dbReference>
<dbReference type="GO" id="GO:0015420">
    <property type="term" value="F:ABC-type vitamin B12 transporter activity"/>
    <property type="evidence" value="ECO:0007669"/>
    <property type="project" value="UniProtKB-UniRule"/>
</dbReference>
<dbReference type="GO" id="GO:0048472">
    <property type="term" value="F:threonine-phosphate decarboxylase activity"/>
    <property type="evidence" value="ECO:0007669"/>
    <property type="project" value="InterPro"/>
</dbReference>
<dbReference type="GO" id="GO:0009236">
    <property type="term" value="P:cobalamin biosynthetic process"/>
    <property type="evidence" value="ECO:0007669"/>
    <property type="project" value="UniProtKB-UniRule"/>
</dbReference>
<dbReference type="HAMAP" id="MF_00024">
    <property type="entry name" value="CobD_CbiB"/>
    <property type="match status" value="1"/>
</dbReference>
<dbReference type="InterPro" id="IPR004485">
    <property type="entry name" value="Cobalamin_biosynth_CobD/CbiB"/>
</dbReference>
<dbReference type="NCBIfam" id="TIGR00380">
    <property type="entry name" value="cobal_cbiB"/>
    <property type="match status" value="1"/>
</dbReference>
<dbReference type="PANTHER" id="PTHR34308">
    <property type="entry name" value="COBALAMIN BIOSYNTHESIS PROTEIN CBIB"/>
    <property type="match status" value="1"/>
</dbReference>
<dbReference type="PANTHER" id="PTHR34308:SF1">
    <property type="entry name" value="COBALAMIN BIOSYNTHESIS PROTEIN CBIB"/>
    <property type="match status" value="1"/>
</dbReference>
<dbReference type="Pfam" id="PF03186">
    <property type="entry name" value="CobD_Cbib"/>
    <property type="match status" value="1"/>
</dbReference>
<protein>
    <recommendedName>
        <fullName evidence="1">Probable cobalamin biosynthesis protein CobD</fullName>
    </recommendedName>
</protein>
<keyword id="KW-1003">Cell membrane</keyword>
<keyword id="KW-0169">Cobalamin biosynthesis</keyword>
<keyword id="KW-0472">Membrane</keyword>
<keyword id="KW-0812">Transmembrane</keyword>
<keyword id="KW-1133">Transmembrane helix</keyword>